<sequence length="229" mass="24055">MKIGIVGAMAQEVEILKNLMADRTETRVASAVIFEGKINGKDVALLQSGIGKVAAAIGTTALLQLAKPDCVINTGSAGGVAKGLKVGDIVISDETRYHDADVTAFGYEKGQLPANPAAFLSDKKLADLAQEIAEKQGQSVKRGLICSGDSFINSEDKITQIQADFPNVMGVEMEATAIAQVCYAFNVPFVVVRAISDGGDGKASMSFEEFLPLAAKQSSTLVLGMIDRL</sequence>
<dbReference type="EC" id="3.2.2.9" evidence="1"/>
<dbReference type="EMBL" id="CP000672">
    <property type="protein sequence ID" value="ABR00734.1"/>
    <property type="molecule type" value="Genomic_DNA"/>
</dbReference>
<dbReference type="SMR" id="A5UIX8"/>
<dbReference type="KEGG" id="hiq:CGSHiGG_09810"/>
<dbReference type="HOGENOM" id="CLU_031248_2_2_6"/>
<dbReference type="UniPathway" id="UPA00904">
    <property type="reaction ID" value="UER00871"/>
</dbReference>
<dbReference type="Proteomes" id="UP000001990">
    <property type="component" value="Chromosome"/>
</dbReference>
<dbReference type="GO" id="GO:0005829">
    <property type="term" value="C:cytosol"/>
    <property type="evidence" value="ECO:0007669"/>
    <property type="project" value="TreeGrafter"/>
</dbReference>
<dbReference type="GO" id="GO:0008782">
    <property type="term" value="F:adenosylhomocysteine nucleosidase activity"/>
    <property type="evidence" value="ECO:0007669"/>
    <property type="project" value="UniProtKB-UniRule"/>
</dbReference>
<dbReference type="GO" id="GO:0008930">
    <property type="term" value="F:methylthioadenosine nucleosidase activity"/>
    <property type="evidence" value="ECO:0007669"/>
    <property type="project" value="UniProtKB-UniRule"/>
</dbReference>
<dbReference type="GO" id="GO:0019509">
    <property type="term" value="P:L-methionine salvage from methylthioadenosine"/>
    <property type="evidence" value="ECO:0007669"/>
    <property type="project" value="UniProtKB-UniRule"/>
</dbReference>
<dbReference type="GO" id="GO:0019284">
    <property type="term" value="P:L-methionine salvage from S-adenosylmethionine"/>
    <property type="evidence" value="ECO:0007669"/>
    <property type="project" value="TreeGrafter"/>
</dbReference>
<dbReference type="GO" id="GO:0009164">
    <property type="term" value="P:nucleoside catabolic process"/>
    <property type="evidence" value="ECO:0007669"/>
    <property type="project" value="InterPro"/>
</dbReference>
<dbReference type="CDD" id="cd09008">
    <property type="entry name" value="MTAN"/>
    <property type="match status" value="1"/>
</dbReference>
<dbReference type="FunFam" id="3.40.50.1580:FF:000001">
    <property type="entry name" value="MTA/SAH nucleosidase family protein"/>
    <property type="match status" value="1"/>
</dbReference>
<dbReference type="Gene3D" id="3.40.50.1580">
    <property type="entry name" value="Nucleoside phosphorylase domain"/>
    <property type="match status" value="1"/>
</dbReference>
<dbReference type="HAMAP" id="MF_01684">
    <property type="entry name" value="Salvage_MtnN"/>
    <property type="match status" value="1"/>
</dbReference>
<dbReference type="InterPro" id="IPR010049">
    <property type="entry name" value="MTA_SAH_Nsdase"/>
</dbReference>
<dbReference type="InterPro" id="IPR000845">
    <property type="entry name" value="Nucleoside_phosphorylase_d"/>
</dbReference>
<dbReference type="InterPro" id="IPR035994">
    <property type="entry name" value="Nucleoside_phosphorylase_sf"/>
</dbReference>
<dbReference type="NCBIfam" id="TIGR01704">
    <property type="entry name" value="MTA_SAH-Nsdase"/>
    <property type="match status" value="1"/>
</dbReference>
<dbReference type="NCBIfam" id="NF004079">
    <property type="entry name" value="PRK05584.1"/>
    <property type="match status" value="1"/>
</dbReference>
<dbReference type="PANTHER" id="PTHR46832">
    <property type="entry name" value="5'-METHYLTHIOADENOSINE/S-ADENOSYLHOMOCYSTEINE NUCLEOSIDASE"/>
    <property type="match status" value="1"/>
</dbReference>
<dbReference type="PANTHER" id="PTHR46832:SF1">
    <property type="entry name" value="5'-METHYLTHIOADENOSINE_S-ADENOSYLHOMOCYSTEINE NUCLEOSIDASE"/>
    <property type="match status" value="1"/>
</dbReference>
<dbReference type="Pfam" id="PF01048">
    <property type="entry name" value="PNP_UDP_1"/>
    <property type="match status" value="1"/>
</dbReference>
<dbReference type="SUPFAM" id="SSF53167">
    <property type="entry name" value="Purine and uridine phosphorylases"/>
    <property type="match status" value="1"/>
</dbReference>
<protein>
    <recommendedName>
        <fullName evidence="1">5'-methylthioadenosine/S-adenosylhomocysteine nucleosidase</fullName>
        <shortName evidence="1">MTA/SAH nucleosidase</shortName>
        <shortName evidence="1">MTAN</shortName>
        <ecNumber evidence="1">3.2.2.9</ecNumber>
    </recommendedName>
    <alternativeName>
        <fullName evidence="1">5'-deoxyadenosine nucleosidase</fullName>
        <shortName evidence="1">DOA nucleosidase</shortName>
        <shortName evidence="1">dAdo nucleosidase</shortName>
    </alternativeName>
    <alternativeName>
        <fullName evidence="1">5'-methylthioadenosine nucleosidase</fullName>
        <shortName evidence="1">MTA nucleosidase</shortName>
    </alternativeName>
    <alternativeName>
        <fullName evidence="1">S-adenosylhomocysteine nucleosidase</fullName>
        <shortName evidence="1">AdoHcy nucleosidase</shortName>
        <shortName evidence="1">SAH nucleosidase</shortName>
        <shortName evidence="1">SRH nucleosidase</shortName>
    </alternativeName>
</protein>
<organism>
    <name type="scientific">Haemophilus influenzae (strain PittGG)</name>
    <dbReference type="NCBI Taxonomy" id="374931"/>
    <lineage>
        <taxon>Bacteria</taxon>
        <taxon>Pseudomonadati</taxon>
        <taxon>Pseudomonadota</taxon>
        <taxon>Gammaproteobacteria</taxon>
        <taxon>Pasteurellales</taxon>
        <taxon>Pasteurellaceae</taxon>
        <taxon>Haemophilus</taxon>
    </lineage>
</organism>
<reference key="1">
    <citation type="journal article" date="2007" name="Genome Biol.">
        <title>Characterization and modeling of the Haemophilus influenzae core and supragenomes based on the complete genomic sequences of Rd and 12 clinical nontypeable strains.</title>
        <authorList>
            <person name="Hogg J.S."/>
            <person name="Hu F.Z."/>
            <person name="Janto B."/>
            <person name="Boissy R."/>
            <person name="Hayes J."/>
            <person name="Keefe R."/>
            <person name="Post J.C."/>
            <person name="Ehrlich G.D."/>
        </authorList>
    </citation>
    <scope>NUCLEOTIDE SEQUENCE [LARGE SCALE GENOMIC DNA]</scope>
    <source>
        <strain>PittGG</strain>
    </source>
</reference>
<accession>A5UIX8</accession>
<gene>
    <name evidence="1" type="primary">mtnN</name>
    <name type="ordered locus">CGSHiGG_09810</name>
</gene>
<feature type="chain" id="PRO_0000359307" description="5'-methylthioadenosine/S-adenosylhomocysteine nucleosidase">
    <location>
        <begin position="1"/>
        <end position="229"/>
    </location>
</feature>
<feature type="active site" description="Proton acceptor" evidence="1">
    <location>
        <position position="12"/>
    </location>
</feature>
<feature type="active site" description="Proton donor" evidence="1">
    <location>
        <position position="197"/>
    </location>
</feature>
<feature type="binding site" evidence="1">
    <location>
        <position position="78"/>
    </location>
    <ligand>
        <name>substrate</name>
    </ligand>
</feature>
<feature type="binding site" evidence="1">
    <location>
        <position position="152"/>
    </location>
    <ligand>
        <name>substrate</name>
    </ligand>
</feature>
<feature type="binding site" evidence="1">
    <location>
        <begin position="173"/>
        <end position="174"/>
    </location>
    <ligand>
        <name>substrate</name>
    </ligand>
</feature>
<name>MTNN_HAEIG</name>
<keyword id="KW-0028">Amino-acid biosynthesis</keyword>
<keyword id="KW-0378">Hydrolase</keyword>
<keyword id="KW-0486">Methionine biosynthesis</keyword>
<proteinExistence type="inferred from homology"/>
<comment type="function">
    <text evidence="1">Catalyzes the irreversible cleavage of the glycosidic bond in both 5'-methylthioadenosine (MTA) and S-adenosylhomocysteine (SAH/AdoHcy) to adenine and the corresponding thioribose, 5'-methylthioribose and S-ribosylhomocysteine, respectively. Also cleaves 5'-deoxyadenosine, a toxic by-product of radical S-adenosylmethionine (SAM) enzymes, into 5-deoxyribose and adenine.</text>
</comment>
<comment type="catalytic activity">
    <reaction evidence="1">
        <text>S-adenosyl-L-homocysteine + H2O = S-(5-deoxy-D-ribos-5-yl)-L-homocysteine + adenine</text>
        <dbReference type="Rhea" id="RHEA:17805"/>
        <dbReference type="ChEBI" id="CHEBI:15377"/>
        <dbReference type="ChEBI" id="CHEBI:16708"/>
        <dbReference type="ChEBI" id="CHEBI:57856"/>
        <dbReference type="ChEBI" id="CHEBI:58195"/>
        <dbReference type="EC" id="3.2.2.9"/>
    </reaction>
</comment>
<comment type="catalytic activity">
    <reaction evidence="1">
        <text>S-methyl-5'-thioadenosine + H2O = 5-(methylsulfanyl)-D-ribose + adenine</text>
        <dbReference type="Rhea" id="RHEA:13617"/>
        <dbReference type="ChEBI" id="CHEBI:15377"/>
        <dbReference type="ChEBI" id="CHEBI:16708"/>
        <dbReference type="ChEBI" id="CHEBI:17509"/>
        <dbReference type="ChEBI" id="CHEBI:78440"/>
        <dbReference type="EC" id="3.2.2.9"/>
    </reaction>
</comment>
<comment type="catalytic activity">
    <reaction evidence="1">
        <text>5'-deoxyadenosine + H2O = 5-deoxy-D-ribose + adenine</text>
        <dbReference type="Rhea" id="RHEA:29859"/>
        <dbReference type="ChEBI" id="CHEBI:15377"/>
        <dbReference type="ChEBI" id="CHEBI:16708"/>
        <dbReference type="ChEBI" id="CHEBI:17319"/>
        <dbReference type="ChEBI" id="CHEBI:149540"/>
        <dbReference type="EC" id="3.2.2.9"/>
    </reaction>
    <physiologicalReaction direction="left-to-right" evidence="1">
        <dbReference type="Rhea" id="RHEA:29860"/>
    </physiologicalReaction>
</comment>
<comment type="pathway">
    <text evidence="1">Amino-acid biosynthesis; L-methionine biosynthesis via salvage pathway; S-methyl-5-thio-alpha-D-ribose 1-phosphate from S-methyl-5'-thioadenosine (hydrolase route): step 1/2.</text>
</comment>
<comment type="similarity">
    <text evidence="1">Belongs to the PNP/UDP phosphorylase family. MtnN subfamily.</text>
</comment>
<evidence type="ECO:0000255" key="1">
    <source>
        <dbReference type="HAMAP-Rule" id="MF_01684"/>
    </source>
</evidence>